<dbReference type="EMBL" id="AF527531">
    <property type="protein sequence ID" value="AAO49497.1"/>
    <property type="molecule type" value="Genomic_RNA"/>
</dbReference>
<dbReference type="RefSeq" id="YP_145805.1">
    <property type="nucleotide sequence ID" value="NC_006504.1"/>
</dbReference>
<dbReference type="PDB" id="5I5N">
    <property type="method" value="X-ray"/>
    <property type="resolution" value="1.42 A"/>
    <property type="chains" value="A/B=3-151"/>
</dbReference>
<dbReference type="PDB" id="5I5O">
    <property type="method" value="X-ray"/>
    <property type="resolution" value="2.68 A"/>
    <property type="chains" value="A/B=3-151"/>
</dbReference>
<dbReference type="PDBsum" id="5I5N"/>
<dbReference type="PDBsum" id="5I5O"/>
<dbReference type="SMR" id="Q80A33"/>
<dbReference type="IntAct" id="Q80A33">
    <property type="interactions" value="5"/>
</dbReference>
<dbReference type="KEGG" id="vg:5075736"/>
<dbReference type="Proteomes" id="UP000008973">
    <property type="component" value="Genome"/>
</dbReference>
<dbReference type="GO" id="GO:0039548">
    <property type="term" value="P:symbiont-mediated suppression of host cytoplasmic pattern recognition receptor signaling pathway via inhibition of IRF3 activity"/>
    <property type="evidence" value="ECO:0007669"/>
    <property type="project" value="UniProtKB-KW"/>
</dbReference>
<dbReference type="GO" id="GO:0039557">
    <property type="term" value="P:symbiont-mediated suppression of host cytoplasmic pattern recognition receptor signaling pathway via inhibition of IRF7 activity"/>
    <property type="evidence" value="ECO:0007669"/>
    <property type="project" value="UniProtKB-KW"/>
</dbReference>
<dbReference type="InterPro" id="IPR035212">
    <property type="entry name" value="Mx/ML_C"/>
</dbReference>
<dbReference type="Pfam" id="PF17536">
    <property type="entry name" value="Mx_ML"/>
    <property type="match status" value="1"/>
</dbReference>
<organism>
    <name type="scientific">Thogoto virus (isolate SiAr 126)</name>
    <name type="common">Tho</name>
    <dbReference type="NCBI Taxonomy" id="126796"/>
    <lineage>
        <taxon>Viruses</taxon>
        <taxon>Riboviria</taxon>
        <taxon>Orthornavirae</taxon>
        <taxon>Negarnaviricota</taxon>
        <taxon>Polyploviricotina</taxon>
        <taxon>Insthoviricetes</taxon>
        <taxon>Articulavirales</taxon>
        <taxon>Orthomyxoviridae</taxon>
        <taxon>Thogotovirus</taxon>
        <taxon>Thogotovirus thogotoense</taxon>
    </lineage>
</organism>
<accession>Q80A33</accession>
<feature type="chain" id="PRO_0000423167" description="Protein ML">
    <location>
        <begin position="1"/>
        <end position="304"/>
    </location>
</feature>
<feature type="helix" evidence="5">
    <location>
        <begin position="10"/>
        <end position="13"/>
    </location>
</feature>
<feature type="helix" evidence="5">
    <location>
        <begin position="16"/>
        <end position="18"/>
    </location>
</feature>
<feature type="helix" evidence="5">
    <location>
        <begin position="19"/>
        <end position="27"/>
    </location>
</feature>
<feature type="helix" evidence="5">
    <location>
        <begin position="31"/>
        <end position="43"/>
    </location>
</feature>
<feature type="helix" evidence="5">
    <location>
        <begin position="49"/>
        <end position="63"/>
    </location>
</feature>
<feature type="helix" evidence="5">
    <location>
        <begin position="70"/>
        <end position="74"/>
    </location>
</feature>
<feature type="helix" evidence="5">
    <location>
        <begin position="84"/>
        <end position="96"/>
    </location>
</feature>
<feature type="helix" evidence="5">
    <location>
        <begin position="100"/>
        <end position="104"/>
    </location>
</feature>
<feature type="helix" evidence="5">
    <location>
        <begin position="109"/>
        <end position="120"/>
    </location>
</feature>
<feature type="helix" evidence="5">
    <location>
        <begin position="129"/>
        <end position="138"/>
    </location>
</feature>
<gene>
    <name type="ordered locus">Segment 6</name>
</gene>
<organismHost>
    <name type="scientific">Amblyomma variegatum</name>
    <name type="common">Tropical bont tick</name>
    <dbReference type="NCBI Taxonomy" id="34610"/>
</organismHost>
<organismHost>
    <name type="scientific">Cavia cutleri</name>
    <name type="common">Guinea pig</name>
    <dbReference type="NCBI Taxonomy" id="10144"/>
</organismHost>
<organismHost>
    <name type="scientific">Mungos mungo</name>
    <name type="common">Banded mongoose</name>
    <dbReference type="NCBI Taxonomy" id="210652"/>
</organismHost>
<organismHost>
    <name type="scientific">Rhipicephalus appendiculatus</name>
    <name type="common">Brown ear tick</name>
    <dbReference type="NCBI Taxonomy" id="34631"/>
</organismHost>
<organismHost>
    <name type="scientific">Rhipicephalus microplus</name>
    <name type="common">Cattle tick</name>
    <name type="synonym">Boophilus microplus</name>
    <dbReference type="NCBI Taxonomy" id="6941"/>
</organismHost>
<keyword id="KW-0002">3D-structure</keyword>
<keyword id="KW-0025">Alternative splicing</keyword>
<keyword id="KW-0945">Host-virus interaction</keyword>
<keyword id="KW-1090">Inhibition of host innate immune response by virus</keyword>
<keyword id="KW-1092">Inhibition of host IRF3 by virus</keyword>
<keyword id="KW-1093">Inhibition of host IRF7 by virus</keyword>
<keyword id="KW-1113">Inhibition of host RLR pathway by virus</keyword>
<keyword id="KW-1185">Reference proteome</keyword>
<keyword id="KW-0899">Viral immunoevasion</keyword>
<reference key="1">
    <citation type="journal article" date="2003" name="J. Virol.">
        <title>Novel gene product of Thogoto virus segment 6 codes for an interferon antagonist.</title>
        <authorList>
            <person name="Hagmaier K."/>
            <person name="Jennings S."/>
            <person name="Buse J."/>
            <person name="Weber F."/>
            <person name="Kochs G."/>
        </authorList>
    </citation>
    <scope>NUCLEOTIDE SEQUENCE [GENOMIC RNA]</scope>
</reference>
<reference key="2">
    <citation type="journal article" date="2005" name="Virology">
        <title>Thogoto virus ML protein suppresses IRF3 function.</title>
        <authorList>
            <person name="Jennings S."/>
            <person name="Martinez-Sobrido L."/>
            <person name="Garcia-Sastre A."/>
            <person name="Weber F."/>
            <person name="Kochs G."/>
        </authorList>
    </citation>
    <scope>FUNCTION</scope>
</reference>
<reference key="3">
    <citation type="journal article" date="2008" name="J. Virol.">
        <title>The interferon antagonist ML protein of thogoto virus targets general transcription factor IIB.</title>
        <authorList>
            <person name="Vogt C."/>
            <person name="Preuss E."/>
            <person name="Mayer D."/>
            <person name="Weber F."/>
            <person name="Schwemmle M."/>
            <person name="Kochs G."/>
        </authorList>
    </citation>
    <scope>FUNCTION</scope>
</reference>
<reference key="4">
    <citation type="journal article" date="2010" name="J. Gen. Virol.">
        <title>Thogoto virus ML protein is a potent inhibitor of the interferon regulatory factor-7 transcription factor.</title>
        <authorList>
            <person name="Buettner N."/>
            <person name="Vogt C."/>
            <person name="Martinez-Sobrido L."/>
            <person name="Weber F."/>
            <person name="Waibler Z."/>
            <person name="Kochs G."/>
        </authorList>
    </citation>
    <scope>FUNCTION</scope>
</reference>
<evidence type="ECO:0000269" key="1">
    <source>
    </source>
</evidence>
<evidence type="ECO:0000269" key="2">
    <source>
    </source>
</evidence>
<evidence type="ECO:0000269" key="3">
    <source>
    </source>
</evidence>
<evidence type="ECO:0000305" key="4">
    <source>
    </source>
</evidence>
<evidence type="ECO:0007829" key="5">
    <source>
        <dbReference type="PDB" id="5I5N"/>
    </source>
</evidence>
<protein>
    <recommendedName>
        <fullName>Protein ML</fullName>
        <shortName>ML</shortName>
    </recommendedName>
</protein>
<sequence length="304" mass="34463">MASNLPVRSFSEVCCAEARAAIIQMENNPDETVCNRIWKIHRDLQSSDLTTTVQVMMVYRFISKRVPEGCFAILSGVNTGMYNPRELKRSYVQSLSSGTSCEFLRSLDKLAKNLLAVHVCSDVKMSLNKRQVIDFISGEEDPTLHTAEHLTSLALDDSPSAVVYSGWQQEAIKLHNTIRKIATMRPADCKAGKFYSDILSACDQTKELLDAFDQGKLAYDRDVVLIGWMDEIIKIFSKPDYLEAKGVSYQVLKNVSNKVALLRESIWWVTELDGREYLFFDESWYLHGMSAFSDGVPGYEDFIY</sequence>
<comment type="function">
    <text evidence="1 2 3">Blocks host IRF3 and IRF7, thereby inhibiting IFN-beta expression and activation of host antiviral state.</text>
</comment>
<comment type="alternative products">
    <event type="alternative splicing"/>
    <isoform>
        <id>Q80A33-1</id>
        <name>Protein ML</name>
        <sequence type="displayed"/>
    </isoform>
    <isoform>
        <id>Q77D96-1</id>
        <name>Matrix protein</name>
        <sequence type="external"/>
    </isoform>
</comment>
<comment type="caution">
    <text evidence="4">It has been suggested that ML could target host TFIIB, but this effect could be indirect.</text>
</comment>
<name>ML_THOGV</name>
<proteinExistence type="evidence at protein level"/>